<evidence type="ECO:0000255" key="1">
    <source>
        <dbReference type="HAMAP-Rule" id="MF_01414"/>
    </source>
</evidence>
<sequence length="176" mass="20200">MILIIYAHPYPHHSHANKRMLEQARTLEGVEIRSLYQLYPDFNIDIAAEQEALSRADLIVWQHPMQWYSIPPLLKLWIDKVFSHGWAYGHGGTALHGKHLLWAVTTGGGESHFEIGTHPGFDVLSQPLQATAIYCGLNWLPPFAMHCTFICDDETLEGQARHYKQRLLEWQEAHHG</sequence>
<organism>
    <name type="scientific">Escherichia coli O6:K15:H31 (strain 536 / UPEC)</name>
    <dbReference type="NCBI Taxonomy" id="362663"/>
    <lineage>
        <taxon>Bacteria</taxon>
        <taxon>Pseudomonadati</taxon>
        <taxon>Pseudomonadota</taxon>
        <taxon>Gammaproteobacteria</taxon>
        <taxon>Enterobacterales</taxon>
        <taxon>Enterobacteriaceae</taxon>
        <taxon>Escherichia</taxon>
    </lineage>
</organism>
<protein>
    <recommendedName>
        <fullName evidence="1">Glutathione-regulated potassium-efflux system ancillary protein KefF</fullName>
    </recommendedName>
    <alternativeName>
        <fullName evidence="1">Quinone oxidoreductase KefF</fullName>
        <ecNumber evidence="1">1.6.5.2</ecNumber>
    </alternativeName>
</protein>
<dbReference type="EC" id="1.6.5.2" evidence="1"/>
<dbReference type="EMBL" id="CP000247">
    <property type="protein sequence ID" value="ABG68088.1"/>
    <property type="molecule type" value="Genomic_DNA"/>
</dbReference>
<dbReference type="RefSeq" id="WP_000600732.1">
    <property type="nucleotide sequence ID" value="NC_008253.1"/>
</dbReference>
<dbReference type="SMR" id="Q0TLU3"/>
<dbReference type="KEGG" id="ecp:ECP_0046"/>
<dbReference type="HOGENOM" id="CLU_058643_0_2_6"/>
<dbReference type="Proteomes" id="UP000009182">
    <property type="component" value="Chromosome"/>
</dbReference>
<dbReference type="GO" id="GO:0005886">
    <property type="term" value="C:plasma membrane"/>
    <property type="evidence" value="ECO:0007669"/>
    <property type="project" value="UniProtKB-SubCell"/>
</dbReference>
<dbReference type="GO" id="GO:0009055">
    <property type="term" value="F:electron transfer activity"/>
    <property type="evidence" value="ECO:0007669"/>
    <property type="project" value="TreeGrafter"/>
</dbReference>
<dbReference type="GO" id="GO:0010181">
    <property type="term" value="F:FMN binding"/>
    <property type="evidence" value="ECO:0007669"/>
    <property type="project" value="UniProtKB-UniRule"/>
</dbReference>
<dbReference type="GO" id="GO:0050136">
    <property type="term" value="F:NADH:ubiquinone reductase (non-electrogenic) activity"/>
    <property type="evidence" value="ECO:0007669"/>
    <property type="project" value="RHEA"/>
</dbReference>
<dbReference type="GO" id="GO:0008753">
    <property type="term" value="F:NADPH dehydrogenase (quinone) activity"/>
    <property type="evidence" value="ECO:0007669"/>
    <property type="project" value="RHEA"/>
</dbReference>
<dbReference type="GO" id="GO:1901381">
    <property type="term" value="P:positive regulation of potassium ion transmembrane transport"/>
    <property type="evidence" value="ECO:0007669"/>
    <property type="project" value="UniProtKB-UniRule"/>
</dbReference>
<dbReference type="GO" id="GO:0006813">
    <property type="term" value="P:potassium ion transport"/>
    <property type="evidence" value="ECO:0007669"/>
    <property type="project" value="InterPro"/>
</dbReference>
<dbReference type="FunFam" id="3.40.50.360:FF:000008">
    <property type="entry name" value="Glutathione-regulated potassium-efflux system ancillary protein KefF"/>
    <property type="match status" value="1"/>
</dbReference>
<dbReference type="Gene3D" id="3.40.50.360">
    <property type="match status" value="1"/>
</dbReference>
<dbReference type="HAMAP" id="MF_01414">
    <property type="entry name" value="K_H_efflux_KefF"/>
    <property type="match status" value="1"/>
</dbReference>
<dbReference type="InterPro" id="IPR003680">
    <property type="entry name" value="Flavodoxin_fold"/>
</dbReference>
<dbReference type="InterPro" id="IPR029039">
    <property type="entry name" value="Flavoprotein-like_sf"/>
</dbReference>
<dbReference type="InterPro" id="IPR023948">
    <property type="entry name" value="K_H_efflux_KefF"/>
</dbReference>
<dbReference type="InterPro" id="IPR046980">
    <property type="entry name" value="KefG/KefF"/>
</dbReference>
<dbReference type="NCBIfam" id="NF002044">
    <property type="entry name" value="PRK00871.1"/>
    <property type="match status" value="1"/>
</dbReference>
<dbReference type="PANTHER" id="PTHR47307:SF2">
    <property type="entry name" value="GLUTATHIONE-REGULATED POTASSIUM-EFFLUX SYSTEM ANCILLARY PROTEIN KEFF"/>
    <property type="match status" value="1"/>
</dbReference>
<dbReference type="PANTHER" id="PTHR47307">
    <property type="entry name" value="GLUTATHIONE-REGULATED POTASSIUM-EFFLUX SYSTEM ANCILLARY PROTEIN KEFG"/>
    <property type="match status" value="1"/>
</dbReference>
<dbReference type="Pfam" id="PF02525">
    <property type="entry name" value="Flavodoxin_2"/>
    <property type="match status" value="1"/>
</dbReference>
<dbReference type="SUPFAM" id="SSF52218">
    <property type="entry name" value="Flavoproteins"/>
    <property type="match status" value="1"/>
</dbReference>
<proteinExistence type="inferred from homology"/>
<keyword id="KW-0997">Cell inner membrane</keyword>
<keyword id="KW-1003">Cell membrane</keyword>
<keyword id="KW-0285">Flavoprotein</keyword>
<keyword id="KW-0288">FMN</keyword>
<keyword id="KW-0472">Membrane</keyword>
<keyword id="KW-0520">NAD</keyword>
<keyword id="KW-0560">Oxidoreductase</keyword>
<accession>Q0TLU3</accession>
<gene>
    <name evidence="1" type="primary">kefF</name>
    <name type="ordered locus">ECP_0046</name>
</gene>
<feature type="chain" id="PRO_1000068466" description="Glutathione-regulated potassium-efflux system ancillary protein KefF">
    <location>
        <begin position="1"/>
        <end position="176"/>
    </location>
</feature>
<feature type="binding site" evidence="1">
    <location>
        <position position="8"/>
    </location>
    <ligand>
        <name>FMN</name>
        <dbReference type="ChEBI" id="CHEBI:58210"/>
    </ligand>
</feature>
<feature type="binding site" evidence="1">
    <location>
        <begin position="14"/>
        <end position="17"/>
    </location>
    <ligand>
        <name>FMN</name>
        <dbReference type="ChEBI" id="CHEBI:58210"/>
    </ligand>
</feature>
<feature type="binding site" evidence="1">
    <location>
        <begin position="65"/>
        <end position="68"/>
    </location>
    <ligand>
        <name>FMN</name>
        <dbReference type="ChEBI" id="CHEBI:58210"/>
    </ligand>
</feature>
<feature type="binding site" evidence="1">
    <location>
        <begin position="105"/>
        <end position="108"/>
    </location>
    <ligand>
        <name>FMN</name>
        <dbReference type="ChEBI" id="CHEBI:58210"/>
    </ligand>
</feature>
<name>KEFF_ECOL5</name>
<reference key="1">
    <citation type="journal article" date="2006" name="Mol. Microbiol.">
        <title>Role of pathogenicity island-associated integrases in the genome plasticity of uropathogenic Escherichia coli strain 536.</title>
        <authorList>
            <person name="Hochhut B."/>
            <person name="Wilde C."/>
            <person name="Balling G."/>
            <person name="Middendorf B."/>
            <person name="Dobrindt U."/>
            <person name="Brzuszkiewicz E."/>
            <person name="Gottschalk G."/>
            <person name="Carniel E."/>
            <person name="Hacker J."/>
        </authorList>
    </citation>
    <scope>NUCLEOTIDE SEQUENCE [LARGE SCALE GENOMIC DNA]</scope>
    <source>
        <strain>536 / UPEC</strain>
    </source>
</reference>
<comment type="function">
    <text evidence="1">Regulatory subunit of a potassium efflux system that confers protection against electrophiles. Required for full activity of KefC. Shows redox enzymatic activity, but this enzymatic activity is not required for activation of KefC.</text>
</comment>
<comment type="catalytic activity">
    <reaction evidence="1">
        <text>a quinone + NADH + H(+) = a quinol + NAD(+)</text>
        <dbReference type="Rhea" id="RHEA:46160"/>
        <dbReference type="ChEBI" id="CHEBI:15378"/>
        <dbReference type="ChEBI" id="CHEBI:24646"/>
        <dbReference type="ChEBI" id="CHEBI:57540"/>
        <dbReference type="ChEBI" id="CHEBI:57945"/>
        <dbReference type="ChEBI" id="CHEBI:132124"/>
        <dbReference type="EC" id="1.6.5.2"/>
    </reaction>
</comment>
<comment type="catalytic activity">
    <reaction evidence="1">
        <text>a quinone + NADPH + H(+) = a quinol + NADP(+)</text>
        <dbReference type="Rhea" id="RHEA:46164"/>
        <dbReference type="ChEBI" id="CHEBI:15378"/>
        <dbReference type="ChEBI" id="CHEBI:24646"/>
        <dbReference type="ChEBI" id="CHEBI:57783"/>
        <dbReference type="ChEBI" id="CHEBI:58349"/>
        <dbReference type="ChEBI" id="CHEBI:132124"/>
        <dbReference type="EC" id="1.6.5.2"/>
    </reaction>
</comment>
<comment type="cofactor">
    <cofactor evidence="1">
        <name>FMN</name>
        <dbReference type="ChEBI" id="CHEBI:58210"/>
    </cofactor>
</comment>
<comment type="subunit">
    <text evidence="1">Homodimer. Interacts with KefC.</text>
</comment>
<comment type="subcellular location">
    <subcellularLocation>
        <location evidence="1">Cell inner membrane</location>
        <topology evidence="1">Peripheral membrane protein</topology>
        <orientation evidence="1">Cytoplasmic side</orientation>
    </subcellularLocation>
</comment>
<comment type="similarity">
    <text evidence="1">Belongs to the NAD(P)H dehydrogenase (quinone) family. KefF subfamily.</text>
</comment>